<evidence type="ECO:0000250" key="1"/>
<evidence type="ECO:0000255" key="2"/>
<evidence type="ECO:0000255" key="3">
    <source>
        <dbReference type="PROSITE-ProRule" id="PRU00836"/>
    </source>
</evidence>
<evidence type="ECO:0000256" key="4">
    <source>
        <dbReference type="SAM" id="MobiDB-lite"/>
    </source>
</evidence>
<evidence type="ECO:0000305" key="5"/>
<gene>
    <name type="primary">RCF1</name>
    <name type="synonym">AIM31</name>
    <name type="ORF">NECHADRAFT_102404</name>
</gene>
<keyword id="KW-0175">Coiled coil</keyword>
<keyword id="KW-0472">Membrane</keyword>
<keyword id="KW-0496">Mitochondrion</keyword>
<keyword id="KW-1185">Reference proteome</keyword>
<keyword id="KW-0812">Transmembrane</keyword>
<keyword id="KW-1133">Transmembrane helix</keyword>
<organism>
    <name type="scientific">Fusarium vanettenii (strain ATCC MYA-4622 / CBS 123669 / FGSC 9596 / NRRL 45880 / 77-13-4)</name>
    <name type="common">Fusarium solani subsp. pisi</name>
    <dbReference type="NCBI Taxonomy" id="660122"/>
    <lineage>
        <taxon>Eukaryota</taxon>
        <taxon>Fungi</taxon>
        <taxon>Dikarya</taxon>
        <taxon>Ascomycota</taxon>
        <taxon>Pezizomycotina</taxon>
        <taxon>Sordariomycetes</taxon>
        <taxon>Hypocreomycetidae</taxon>
        <taxon>Hypocreales</taxon>
        <taxon>Nectriaceae</taxon>
        <taxon>Fusarium</taxon>
        <taxon>Fusarium solani species complex</taxon>
        <taxon>Fusarium vanettenii</taxon>
    </lineage>
</organism>
<dbReference type="EMBL" id="GG698896">
    <property type="protein sequence ID" value="EEU48184.1"/>
    <property type="molecule type" value="Genomic_DNA"/>
</dbReference>
<dbReference type="RefSeq" id="XP_003053897.1">
    <property type="nucleotide sequence ID" value="XM_003053851.1"/>
</dbReference>
<dbReference type="FunCoup" id="C7YJ02">
    <property type="interactions" value="74"/>
</dbReference>
<dbReference type="STRING" id="660122.C7YJ02"/>
<dbReference type="EnsemblFungi" id="NechaT102404">
    <property type="protein sequence ID" value="NechaP102404"/>
    <property type="gene ID" value="NechaG102404"/>
</dbReference>
<dbReference type="GeneID" id="9676530"/>
<dbReference type="KEGG" id="nhe:NECHADRAFT_102404"/>
<dbReference type="VEuPathDB" id="FungiDB:NECHADRAFT_102404"/>
<dbReference type="eggNOG" id="KOG4431">
    <property type="taxonomic scope" value="Eukaryota"/>
</dbReference>
<dbReference type="HOGENOM" id="CLU_087356_0_0_1"/>
<dbReference type="InParanoid" id="C7YJ02"/>
<dbReference type="OMA" id="QRWIREL"/>
<dbReference type="OrthoDB" id="6604018at2759"/>
<dbReference type="Proteomes" id="UP000005206">
    <property type="component" value="Unassembled WGS sequence"/>
</dbReference>
<dbReference type="GO" id="GO:0031966">
    <property type="term" value="C:mitochondrial membrane"/>
    <property type="evidence" value="ECO:0007669"/>
    <property type="project" value="UniProtKB-SubCell"/>
</dbReference>
<dbReference type="GO" id="GO:0097250">
    <property type="term" value="P:mitochondrial respirasome assembly"/>
    <property type="evidence" value="ECO:0007669"/>
    <property type="project" value="TreeGrafter"/>
</dbReference>
<dbReference type="Gene3D" id="6.10.140.1320">
    <property type="match status" value="1"/>
</dbReference>
<dbReference type="InterPro" id="IPR007667">
    <property type="entry name" value="Hypoxia_induced_domain"/>
</dbReference>
<dbReference type="InterPro" id="IPR050355">
    <property type="entry name" value="RCF1"/>
</dbReference>
<dbReference type="PANTHER" id="PTHR12297:SF3">
    <property type="entry name" value="HIG1 DOMAIN FAMILY MEMBER 1A"/>
    <property type="match status" value="1"/>
</dbReference>
<dbReference type="PANTHER" id="PTHR12297">
    <property type="entry name" value="HYPOXIA-INDUCBILE GENE 1 HIG1 -RELATED"/>
    <property type="match status" value="1"/>
</dbReference>
<dbReference type="Pfam" id="PF04588">
    <property type="entry name" value="HIG_1_N"/>
    <property type="match status" value="1"/>
</dbReference>
<dbReference type="PROSITE" id="PS51503">
    <property type="entry name" value="HIG1"/>
    <property type="match status" value="1"/>
</dbReference>
<accession>C7YJ02</accession>
<comment type="function">
    <text evidence="1">Cytochrome c oxidase subunit which plays a role in assembly of respiratory supercomplexes.</text>
</comment>
<comment type="subunit">
    <text evidence="1">Associates with the respiratory chain complex III/complex IV supercomplex.</text>
</comment>
<comment type="subcellular location">
    <subcellularLocation>
        <location evidence="3">Mitochondrion membrane</location>
        <topology evidence="3">Multi-pass membrane protein</topology>
    </subcellularLocation>
</comment>
<comment type="similarity">
    <text evidence="5">Belongs to the RCF1 family.</text>
</comment>
<feature type="chain" id="PRO_0000399640" description="Respiratory supercomplex factor 1, mitochondrial">
    <location>
        <begin position="1"/>
        <end position="230"/>
    </location>
</feature>
<feature type="transmembrane region" description="Helical" evidence="3">
    <location>
        <begin position="40"/>
        <end position="59"/>
    </location>
</feature>
<feature type="transmembrane region" description="Helical" evidence="3">
    <location>
        <begin position="71"/>
        <end position="93"/>
    </location>
</feature>
<feature type="domain" description="HIG1" evidence="3">
    <location>
        <begin position="12"/>
        <end position="103"/>
    </location>
</feature>
<feature type="region of interest" description="Disordered" evidence="4">
    <location>
        <begin position="1"/>
        <end position="20"/>
    </location>
</feature>
<feature type="region of interest" description="Disordered" evidence="4">
    <location>
        <begin position="153"/>
        <end position="230"/>
    </location>
</feature>
<feature type="coiled-coil region" evidence="2">
    <location>
        <begin position="93"/>
        <end position="156"/>
    </location>
</feature>
<feature type="compositionally biased region" description="Pro residues" evidence="4">
    <location>
        <begin position="1"/>
        <end position="12"/>
    </location>
</feature>
<feature type="compositionally biased region" description="Basic and acidic residues" evidence="4">
    <location>
        <begin position="185"/>
        <end position="196"/>
    </location>
</feature>
<proteinExistence type="inferred from homology"/>
<sequence>MADGPPSIPGPLPSSFDSDQDFYNERPMQKVFRKIKEEPLIPLGIGLTSLAFVNAYRALRRGDSKQANRMFRARVAAQGFTVIAMLAGSMYYQKDREKSKELRQLQEQRDAEEKRLKWIRELEARDDEEKAMKARLEQRRQLVQAQRAEEAEAAAAAAATTEEKPEATSGGAGGILSRIGLWPQGEKKEEEKKVAEELVEETAGDKSGKKKNPKSSLGDLGEIISSQKKD</sequence>
<reference key="1">
    <citation type="journal article" date="2009" name="PLoS Genet.">
        <title>The genome of Nectria haematococca: contribution of supernumerary chromosomes to gene expansion.</title>
        <authorList>
            <person name="Coleman J.J."/>
            <person name="Rounsley S.D."/>
            <person name="Rodriguez-Carres M."/>
            <person name="Kuo A."/>
            <person name="Wasmann C.C."/>
            <person name="Grimwood J."/>
            <person name="Schmutz J."/>
            <person name="Taga M."/>
            <person name="White G.J."/>
            <person name="Zhou S."/>
            <person name="Schwartz D.C."/>
            <person name="Freitag M."/>
            <person name="Ma L.-J."/>
            <person name="Danchin E.G.J."/>
            <person name="Henrissat B."/>
            <person name="Coutinho P.M."/>
            <person name="Nelson D.R."/>
            <person name="Straney D."/>
            <person name="Napoli C.A."/>
            <person name="Barker B.M."/>
            <person name="Gribskov M."/>
            <person name="Rep M."/>
            <person name="Kroken S."/>
            <person name="Molnar I."/>
            <person name="Rensing C."/>
            <person name="Kennell J.C."/>
            <person name="Zamora J."/>
            <person name="Farman M.L."/>
            <person name="Selker E.U."/>
            <person name="Salamov A."/>
            <person name="Shapiro H."/>
            <person name="Pangilinan J."/>
            <person name="Lindquist E."/>
            <person name="Lamers C."/>
            <person name="Grigoriev I.V."/>
            <person name="Geiser D.M."/>
            <person name="Covert S.F."/>
            <person name="Temporini E."/>
            <person name="VanEtten H.D."/>
        </authorList>
    </citation>
    <scope>NUCLEOTIDE SEQUENCE [LARGE SCALE GENOMIC DNA]</scope>
    <source>
        <strain>ATCC MYA-4622 / CBS 123669 / FGSC 9596 / NRRL 45880 / 77-13-4</strain>
    </source>
</reference>
<name>RCF1_FUSV7</name>
<protein>
    <recommendedName>
        <fullName>Respiratory supercomplex factor 1, mitochondrial</fullName>
    </recommendedName>
</protein>